<dbReference type="EC" id="2.1.1.166" evidence="1"/>
<dbReference type="EMBL" id="CP000742">
    <property type="protein sequence ID" value="ABR55372.1"/>
    <property type="molecule type" value="Genomic_DNA"/>
</dbReference>
<dbReference type="RefSeq" id="WP_012066286.1">
    <property type="nucleotide sequence ID" value="NC_009634.1"/>
</dbReference>
<dbReference type="SMR" id="A6USA0"/>
<dbReference type="STRING" id="406327.Mevan_1478"/>
<dbReference type="GeneID" id="5324858"/>
<dbReference type="KEGG" id="mvn:Mevan_1478"/>
<dbReference type="eggNOG" id="arCOG00079">
    <property type="taxonomic scope" value="Archaea"/>
</dbReference>
<dbReference type="HOGENOM" id="CLU_009422_4_4_2"/>
<dbReference type="OrthoDB" id="26307at2157"/>
<dbReference type="Proteomes" id="UP000001107">
    <property type="component" value="Chromosome"/>
</dbReference>
<dbReference type="GO" id="GO:0005737">
    <property type="term" value="C:cytoplasm"/>
    <property type="evidence" value="ECO:0007669"/>
    <property type="project" value="UniProtKB-SubCell"/>
</dbReference>
<dbReference type="GO" id="GO:0008650">
    <property type="term" value="F:rRNA (uridine-2'-O-)-methyltransferase activity"/>
    <property type="evidence" value="ECO:0007669"/>
    <property type="project" value="UniProtKB-UniRule"/>
</dbReference>
<dbReference type="CDD" id="cd20754">
    <property type="entry name" value="capping_2-OMTase_viral"/>
    <property type="match status" value="1"/>
</dbReference>
<dbReference type="Gene3D" id="3.40.50.150">
    <property type="entry name" value="Vaccinia Virus protein VP39"/>
    <property type="match status" value="1"/>
</dbReference>
<dbReference type="HAMAP" id="MF_01547">
    <property type="entry name" value="RNA_methyltr_E"/>
    <property type="match status" value="1"/>
</dbReference>
<dbReference type="InterPro" id="IPR050082">
    <property type="entry name" value="RNA_methyltr_RlmE"/>
</dbReference>
<dbReference type="InterPro" id="IPR002877">
    <property type="entry name" value="RNA_MeTrfase_FtsJ_dom"/>
</dbReference>
<dbReference type="InterPro" id="IPR015507">
    <property type="entry name" value="rRNA-MeTfrase_E"/>
</dbReference>
<dbReference type="InterPro" id="IPR029063">
    <property type="entry name" value="SAM-dependent_MTases_sf"/>
</dbReference>
<dbReference type="PANTHER" id="PTHR10920:SF13">
    <property type="entry name" value="PRE-RRNA 2'-O-RIBOSE RNA METHYLTRANSFERASE FTSJ3"/>
    <property type="match status" value="1"/>
</dbReference>
<dbReference type="PANTHER" id="PTHR10920">
    <property type="entry name" value="RIBOSOMAL RNA METHYLTRANSFERASE"/>
    <property type="match status" value="1"/>
</dbReference>
<dbReference type="Pfam" id="PF01728">
    <property type="entry name" value="FtsJ"/>
    <property type="match status" value="1"/>
</dbReference>
<dbReference type="PIRSF" id="PIRSF005461">
    <property type="entry name" value="23S_rRNA_mtase"/>
    <property type="match status" value="1"/>
</dbReference>
<dbReference type="SUPFAM" id="SSF53335">
    <property type="entry name" value="S-adenosyl-L-methionine-dependent methyltransferases"/>
    <property type="match status" value="1"/>
</dbReference>
<keyword id="KW-0963">Cytoplasm</keyword>
<keyword id="KW-0489">Methyltransferase</keyword>
<keyword id="KW-0698">rRNA processing</keyword>
<keyword id="KW-0949">S-adenosyl-L-methionine</keyword>
<keyword id="KW-0808">Transferase</keyword>
<gene>
    <name evidence="1" type="primary">rlmE</name>
    <name evidence="1" type="synonym">rrmJ</name>
    <name type="ordered locus">Mevan_1478</name>
</gene>
<comment type="function">
    <text evidence="1">Specifically methylates the uridine in position 2552 of 23S rRNA at the 2'-O position of the ribose in the fully assembled 50S ribosomal subunit.</text>
</comment>
<comment type="catalytic activity">
    <reaction evidence="1">
        <text>uridine(2552) in 23S rRNA + S-adenosyl-L-methionine = 2'-O-methyluridine(2552) in 23S rRNA + S-adenosyl-L-homocysteine + H(+)</text>
        <dbReference type="Rhea" id="RHEA:42720"/>
        <dbReference type="Rhea" id="RHEA-COMP:10202"/>
        <dbReference type="Rhea" id="RHEA-COMP:10203"/>
        <dbReference type="ChEBI" id="CHEBI:15378"/>
        <dbReference type="ChEBI" id="CHEBI:57856"/>
        <dbReference type="ChEBI" id="CHEBI:59789"/>
        <dbReference type="ChEBI" id="CHEBI:65315"/>
        <dbReference type="ChEBI" id="CHEBI:74478"/>
        <dbReference type="EC" id="2.1.1.166"/>
    </reaction>
</comment>
<comment type="subcellular location">
    <subcellularLocation>
        <location evidence="1">Cytoplasm</location>
    </subcellularLocation>
</comment>
<comment type="similarity">
    <text evidence="1">Belongs to the class I-like SAM-binding methyltransferase superfamily. RNA methyltransferase RlmE family.</text>
</comment>
<evidence type="ECO:0000255" key="1">
    <source>
        <dbReference type="HAMAP-Rule" id="MF_01547"/>
    </source>
</evidence>
<name>RLME_METVS</name>
<protein>
    <recommendedName>
        <fullName evidence="1">Ribosomal RNA large subunit methyltransferase E</fullName>
        <ecNumber evidence="1">2.1.1.166</ecNumber>
    </recommendedName>
    <alternativeName>
        <fullName evidence="1">23S rRNA Um2552 methyltransferase</fullName>
    </alternativeName>
    <alternativeName>
        <fullName evidence="1">rRNA (uridine-2'-O-)-methyltransferase</fullName>
    </alternativeName>
</protein>
<organism>
    <name type="scientific">Methanococcus vannielii (strain ATCC 35089 / DSM 1224 / JCM 13029 / OCM 148 / SB)</name>
    <dbReference type="NCBI Taxonomy" id="406327"/>
    <lineage>
        <taxon>Archaea</taxon>
        <taxon>Methanobacteriati</taxon>
        <taxon>Methanobacteriota</taxon>
        <taxon>Methanomada group</taxon>
        <taxon>Methanococci</taxon>
        <taxon>Methanococcales</taxon>
        <taxon>Methanococcaceae</taxon>
        <taxon>Methanococcus</taxon>
    </lineage>
</organism>
<sequence length="259" mass="29794">MGKKDKRWVLQRKKDPYYNLAKRKNYRSRATYKLFQLNEKFNIIKEKNVVVDLGCAPGGWLQAARDMTGEEGFIVGIDLQQIKPLPYENVIAVKGDMTDEETLKKIQDILPEKPDVIICDASPNISGVWDVDHTRSLELTTMALMTATKMLKKGGNFVVKVFQGDLFYKYVELVSEYFDKAFTTKPRASREESAEVYVIAKHYNGKKFNMKSKSDIVKLLKPQDELKREESALSLRKNISDEDTGMIIKKIKQLRAKKD</sequence>
<proteinExistence type="inferred from homology"/>
<feature type="chain" id="PRO_1000087694" description="Ribosomal RNA large subunit methyltransferase E">
    <location>
        <begin position="1"/>
        <end position="259"/>
    </location>
</feature>
<feature type="active site" description="Proton acceptor" evidence="1">
    <location>
        <position position="160"/>
    </location>
</feature>
<feature type="binding site" evidence="1">
    <location>
        <position position="58"/>
    </location>
    <ligand>
        <name>S-adenosyl-L-methionine</name>
        <dbReference type="ChEBI" id="CHEBI:59789"/>
    </ligand>
</feature>
<feature type="binding site" evidence="1">
    <location>
        <position position="60"/>
    </location>
    <ligand>
        <name>S-adenosyl-L-methionine</name>
        <dbReference type="ChEBI" id="CHEBI:59789"/>
    </ligand>
</feature>
<feature type="binding site" evidence="1">
    <location>
        <position position="78"/>
    </location>
    <ligand>
        <name>S-adenosyl-L-methionine</name>
        <dbReference type="ChEBI" id="CHEBI:59789"/>
    </ligand>
</feature>
<feature type="binding site" evidence="1">
    <location>
        <position position="96"/>
    </location>
    <ligand>
        <name>S-adenosyl-L-methionine</name>
        <dbReference type="ChEBI" id="CHEBI:59789"/>
    </ligand>
</feature>
<feature type="binding site" evidence="1">
    <location>
        <position position="120"/>
    </location>
    <ligand>
        <name>S-adenosyl-L-methionine</name>
        <dbReference type="ChEBI" id="CHEBI:59789"/>
    </ligand>
</feature>
<accession>A6USA0</accession>
<reference key="1">
    <citation type="submission" date="2007-06" db="EMBL/GenBank/DDBJ databases">
        <title>Complete sequence of Methanococcus vannielii SB.</title>
        <authorList>
            <consortium name="US DOE Joint Genome Institute"/>
            <person name="Copeland A."/>
            <person name="Lucas S."/>
            <person name="Lapidus A."/>
            <person name="Barry K."/>
            <person name="Glavina del Rio T."/>
            <person name="Dalin E."/>
            <person name="Tice H."/>
            <person name="Pitluck S."/>
            <person name="Chain P."/>
            <person name="Malfatti S."/>
            <person name="Shin M."/>
            <person name="Vergez L."/>
            <person name="Schmutz J."/>
            <person name="Larimer F."/>
            <person name="Land M."/>
            <person name="Hauser L."/>
            <person name="Kyrpides N."/>
            <person name="Anderson I."/>
            <person name="Sieprawska-Lupa M."/>
            <person name="Whitman W.B."/>
            <person name="Richardson P."/>
        </authorList>
    </citation>
    <scope>NUCLEOTIDE SEQUENCE [LARGE SCALE GENOMIC DNA]</scope>
    <source>
        <strain>ATCC 35089 / DSM 1224 / JCM 13029 / OCM 148 / SB</strain>
    </source>
</reference>